<dbReference type="EC" id="3.5.4.16" evidence="3"/>
<dbReference type="EMBL" id="Z49706">
    <property type="protein sequence ID" value="CAA89808.1"/>
    <property type="molecule type" value="mRNA"/>
</dbReference>
<dbReference type="EMBL" id="AAFI02000112">
    <property type="protein sequence ID" value="EAL63189.1"/>
    <property type="molecule type" value="Genomic_DNA"/>
</dbReference>
<dbReference type="PIR" id="S72439">
    <property type="entry name" value="S72439"/>
</dbReference>
<dbReference type="RefSeq" id="XP_636697.1">
    <property type="nucleotide sequence ID" value="XM_631605.1"/>
</dbReference>
<dbReference type="SMR" id="Q94465"/>
<dbReference type="FunCoup" id="Q94465">
    <property type="interactions" value="110"/>
</dbReference>
<dbReference type="STRING" id="44689.Q94465"/>
<dbReference type="PaxDb" id="44689-DDB0191399"/>
<dbReference type="EnsemblProtists" id="EAL63189">
    <property type="protein sequence ID" value="EAL63189"/>
    <property type="gene ID" value="DDB_G0288481"/>
</dbReference>
<dbReference type="GeneID" id="8626654"/>
<dbReference type="KEGG" id="ddi:DDB_G0288481"/>
<dbReference type="dictyBase" id="DDB_G0288481">
    <property type="gene designation" value="gchA"/>
</dbReference>
<dbReference type="VEuPathDB" id="AmoebaDB:DDB_G0288481"/>
<dbReference type="eggNOG" id="KOG2698">
    <property type="taxonomic scope" value="Eukaryota"/>
</dbReference>
<dbReference type="HOGENOM" id="CLU_049768_2_0_1"/>
<dbReference type="InParanoid" id="Q94465"/>
<dbReference type="OMA" id="CEHMCMS"/>
<dbReference type="PhylomeDB" id="Q94465"/>
<dbReference type="Reactome" id="R-DDI-1474151">
    <property type="pathway name" value="Tetrahydrobiopterin (BH4) synthesis, recycling, salvage and regulation"/>
</dbReference>
<dbReference type="UniPathway" id="UPA00848">
    <property type="reaction ID" value="UER00151"/>
</dbReference>
<dbReference type="PRO" id="PR:Q94465"/>
<dbReference type="Proteomes" id="UP000002195">
    <property type="component" value="Chromosome 5"/>
</dbReference>
<dbReference type="GO" id="GO:0005737">
    <property type="term" value="C:cytoplasm"/>
    <property type="evidence" value="ECO:0000314"/>
    <property type="project" value="dictyBase"/>
</dbReference>
<dbReference type="GO" id="GO:0016020">
    <property type="term" value="C:membrane"/>
    <property type="evidence" value="ECO:0000314"/>
    <property type="project" value="dictyBase"/>
</dbReference>
<dbReference type="GO" id="GO:0045335">
    <property type="term" value="C:phagocytic vesicle"/>
    <property type="evidence" value="ECO:0007005"/>
    <property type="project" value="dictyBase"/>
</dbReference>
<dbReference type="GO" id="GO:0005525">
    <property type="term" value="F:GTP binding"/>
    <property type="evidence" value="ECO:0000318"/>
    <property type="project" value="GO_Central"/>
</dbReference>
<dbReference type="GO" id="GO:0003934">
    <property type="term" value="F:GTP cyclohydrolase I activity"/>
    <property type="evidence" value="ECO:0000314"/>
    <property type="project" value="dictyBase"/>
</dbReference>
<dbReference type="GO" id="GO:0008270">
    <property type="term" value="F:zinc ion binding"/>
    <property type="evidence" value="ECO:0000318"/>
    <property type="project" value="GO_Central"/>
</dbReference>
<dbReference type="GO" id="GO:0008277">
    <property type="term" value="P:regulation of G protein-coupled receptor signaling pathway"/>
    <property type="evidence" value="ECO:0000314"/>
    <property type="project" value="dictyBase"/>
</dbReference>
<dbReference type="GO" id="GO:0140460">
    <property type="term" value="P:response to Gram-negative bacterium"/>
    <property type="evidence" value="ECO:0007005"/>
    <property type="project" value="dictyBase"/>
</dbReference>
<dbReference type="GO" id="GO:0006979">
    <property type="term" value="P:response to oxidative stress"/>
    <property type="evidence" value="ECO:0000314"/>
    <property type="project" value="dictyBase"/>
</dbReference>
<dbReference type="GO" id="GO:0006729">
    <property type="term" value="P:tetrahydrobiopterin biosynthetic process"/>
    <property type="evidence" value="ECO:0000314"/>
    <property type="project" value="dictyBase"/>
</dbReference>
<dbReference type="GO" id="GO:0046654">
    <property type="term" value="P:tetrahydrofolate biosynthetic process"/>
    <property type="evidence" value="ECO:0007669"/>
    <property type="project" value="InterPro"/>
</dbReference>
<dbReference type="CDD" id="cd00642">
    <property type="entry name" value="GTP_cyclohydro1"/>
    <property type="match status" value="1"/>
</dbReference>
<dbReference type="FunFam" id="1.10.286.10:FF:000003">
    <property type="entry name" value="GTP cyclohydrolase 1"/>
    <property type="match status" value="1"/>
</dbReference>
<dbReference type="FunFam" id="3.30.1130.10:FF:000012">
    <property type="entry name" value="GTP cyclohydrolase 1"/>
    <property type="match status" value="1"/>
</dbReference>
<dbReference type="Gene3D" id="1.10.286.10">
    <property type="match status" value="1"/>
</dbReference>
<dbReference type="Gene3D" id="3.30.1130.10">
    <property type="match status" value="1"/>
</dbReference>
<dbReference type="HAMAP" id="MF_00223">
    <property type="entry name" value="FolE"/>
    <property type="match status" value="1"/>
</dbReference>
<dbReference type="InterPro" id="IPR043133">
    <property type="entry name" value="GTP-CH-I_C/QueF"/>
</dbReference>
<dbReference type="InterPro" id="IPR043134">
    <property type="entry name" value="GTP-CH-I_N"/>
</dbReference>
<dbReference type="InterPro" id="IPR001474">
    <property type="entry name" value="GTP_CycHdrlase_I"/>
</dbReference>
<dbReference type="InterPro" id="IPR018234">
    <property type="entry name" value="GTP_CycHdrlase_I_CS"/>
</dbReference>
<dbReference type="InterPro" id="IPR020602">
    <property type="entry name" value="GTP_CycHdrlase_I_dom"/>
</dbReference>
<dbReference type="NCBIfam" id="TIGR00063">
    <property type="entry name" value="folE"/>
    <property type="match status" value="1"/>
</dbReference>
<dbReference type="NCBIfam" id="NF006825">
    <property type="entry name" value="PRK09347.1-2"/>
    <property type="match status" value="1"/>
</dbReference>
<dbReference type="NCBIfam" id="NF006826">
    <property type="entry name" value="PRK09347.1-3"/>
    <property type="match status" value="1"/>
</dbReference>
<dbReference type="PANTHER" id="PTHR11109:SF7">
    <property type="entry name" value="GTP CYCLOHYDROLASE 1"/>
    <property type="match status" value="1"/>
</dbReference>
<dbReference type="PANTHER" id="PTHR11109">
    <property type="entry name" value="GTP CYCLOHYDROLASE I"/>
    <property type="match status" value="1"/>
</dbReference>
<dbReference type="Pfam" id="PF01227">
    <property type="entry name" value="GTP_cyclohydroI"/>
    <property type="match status" value="1"/>
</dbReference>
<dbReference type="SUPFAM" id="SSF55620">
    <property type="entry name" value="Tetrahydrobiopterin biosynthesis enzymes-like"/>
    <property type="match status" value="1"/>
</dbReference>
<dbReference type="PROSITE" id="PS00859">
    <property type="entry name" value="GTP_CYCLOHYDROL_1_1"/>
    <property type="match status" value="1"/>
</dbReference>
<dbReference type="PROSITE" id="PS00860">
    <property type="entry name" value="GTP_CYCLOHYDROL_1_2"/>
    <property type="match status" value="1"/>
</dbReference>
<evidence type="ECO:0000250" key="1"/>
<evidence type="ECO:0000256" key="2">
    <source>
        <dbReference type="SAM" id="MobiDB-lite"/>
    </source>
</evidence>
<evidence type="ECO:0000269" key="3">
    <source>
    </source>
</evidence>
<evidence type="ECO:0000303" key="4">
    <source>
    </source>
</evidence>
<evidence type="ECO:0000305" key="5"/>
<evidence type="ECO:0000305" key="6">
    <source>
    </source>
</evidence>
<name>GCH1_DICDI</name>
<proteinExistence type="evidence at protein level"/>
<keyword id="KW-0021">Allosteric enzyme</keyword>
<keyword id="KW-0342">GTP-binding</keyword>
<keyword id="KW-0378">Hydrolase</keyword>
<keyword id="KW-0479">Metal-binding</keyword>
<keyword id="KW-0547">Nucleotide-binding</keyword>
<keyword id="KW-1185">Reference proteome</keyword>
<keyword id="KW-0783">Tetrahydrobiopterin biosynthesis</keyword>
<keyword id="KW-0862">Zinc</keyword>
<gene>
    <name type="primary">gchA</name>
    <name type="synonym">folE</name>
    <name type="synonym">gtoC</name>
    <name type="ORF">DDB_G0288481</name>
</gene>
<organism>
    <name type="scientific">Dictyostelium discoideum</name>
    <name type="common">Social amoeba</name>
    <dbReference type="NCBI Taxonomy" id="44689"/>
    <lineage>
        <taxon>Eukaryota</taxon>
        <taxon>Amoebozoa</taxon>
        <taxon>Evosea</taxon>
        <taxon>Eumycetozoa</taxon>
        <taxon>Dictyostelia</taxon>
        <taxon>Dictyosteliales</taxon>
        <taxon>Dictyosteliaceae</taxon>
        <taxon>Dictyostelium</taxon>
    </lineage>
</organism>
<protein>
    <recommendedName>
        <fullName>GTP cyclohydrolase 1</fullName>
        <ecNumber evidence="3">3.5.4.16</ecNumber>
    </recommendedName>
    <alternativeName>
        <fullName evidence="4">GTP cyclohydrolase I</fullName>
        <shortName evidence="4">GTP-CH</shortName>
        <shortName>GTP-CH-I</shortName>
    </alternativeName>
</protein>
<feature type="chain" id="PRO_0000119481" description="GTP cyclohydrolase 1">
    <location>
        <begin position="1"/>
        <end position="232"/>
    </location>
</feature>
<feature type="region of interest" description="Disordered" evidence="2">
    <location>
        <begin position="1"/>
        <end position="24"/>
    </location>
</feature>
<feature type="binding site" evidence="1">
    <location>
        <position position="121"/>
    </location>
    <ligand>
        <name>Zn(2+)</name>
        <dbReference type="ChEBI" id="CHEBI:29105"/>
    </ligand>
</feature>
<feature type="binding site" evidence="1">
    <location>
        <position position="124"/>
    </location>
    <ligand>
        <name>Zn(2+)</name>
        <dbReference type="ChEBI" id="CHEBI:29105"/>
    </ligand>
</feature>
<feature type="binding site" evidence="1">
    <location>
        <position position="192"/>
    </location>
    <ligand>
        <name>Zn(2+)</name>
        <dbReference type="ChEBI" id="CHEBI:29105"/>
    </ligand>
</feature>
<feature type="sequence conflict" description="In Ref. 1; CAA89808." evidence="5" ref="1">
    <original>E</original>
    <variation>D</variation>
    <location>
        <position position="187"/>
    </location>
</feature>
<feature type="sequence conflict" description="In Ref. 1; CAA89808." evidence="5" ref="1">
    <original>V</original>
    <variation>A</variation>
    <location>
        <position position="206"/>
    </location>
</feature>
<feature type="sequence conflict" description="In Ref. 1; CAA89808." evidence="5" ref="1">
    <original>K</original>
    <variation>E</variation>
    <location>
        <position position="216"/>
    </location>
</feature>
<feature type="sequence conflict" description="In Ref. 1; CAA89808." evidence="5" ref="1">
    <original>IKSNK</original>
    <variation>FNSTN</variation>
    <location>
        <begin position="228"/>
        <end position="232"/>
    </location>
</feature>
<reference key="1">
    <citation type="journal article" date="1996" name="Biochem. J.">
        <title>Molecular cloning of a cDNA coding for GTP cyclohydrolase I from Dictyostelium discoideum.</title>
        <authorList>
            <person name="Witter K."/>
            <person name="Cahill D.J."/>
            <person name="Werner T."/>
            <person name="Ziegler I."/>
            <person name="Roedl W."/>
            <person name="Bacher A."/>
            <person name="Guetlich M."/>
        </authorList>
    </citation>
    <scope>NUCLEOTIDE SEQUENCE [MRNA]</scope>
    <scope>FUNCTION</scope>
    <scope>CATALYTIC ACTIVITY</scope>
    <scope>BIOPHYSICOCHEMICAL PROPERTIES</scope>
    <scope>PATHWAY</scope>
    <source>
        <strain>AX2</strain>
    </source>
</reference>
<reference key="2">
    <citation type="journal article" date="2005" name="Nature">
        <title>The genome of the social amoeba Dictyostelium discoideum.</title>
        <authorList>
            <person name="Eichinger L."/>
            <person name="Pachebat J.A."/>
            <person name="Gloeckner G."/>
            <person name="Rajandream M.A."/>
            <person name="Sucgang R."/>
            <person name="Berriman M."/>
            <person name="Song J."/>
            <person name="Olsen R."/>
            <person name="Szafranski K."/>
            <person name="Xu Q."/>
            <person name="Tunggal B."/>
            <person name="Kummerfeld S."/>
            <person name="Madera M."/>
            <person name="Konfortov B.A."/>
            <person name="Rivero F."/>
            <person name="Bankier A.T."/>
            <person name="Lehmann R."/>
            <person name="Hamlin N."/>
            <person name="Davies R."/>
            <person name="Gaudet P."/>
            <person name="Fey P."/>
            <person name="Pilcher K."/>
            <person name="Chen G."/>
            <person name="Saunders D."/>
            <person name="Sodergren E.J."/>
            <person name="Davis P."/>
            <person name="Kerhornou A."/>
            <person name="Nie X."/>
            <person name="Hall N."/>
            <person name="Anjard C."/>
            <person name="Hemphill L."/>
            <person name="Bason N."/>
            <person name="Farbrother P."/>
            <person name="Desany B."/>
            <person name="Just E."/>
            <person name="Morio T."/>
            <person name="Rost R."/>
            <person name="Churcher C.M."/>
            <person name="Cooper J."/>
            <person name="Haydock S."/>
            <person name="van Driessche N."/>
            <person name="Cronin A."/>
            <person name="Goodhead I."/>
            <person name="Muzny D.M."/>
            <person name="Mourier T."/>
            <person name="Pain A."/>
            <person name="Lu M."/>
            <person name="Harper D."/>
            <person name="Lindsay R."/>
            <person name="Hauser H."/>
            <person name="James K.D."/>
            <person name="Quiles M."/>
            <person name="Madan Babu M."/>
            <person name="Saito T."/>
            <person name="Buchrieser C."/>
            <person name="Wardroper A."/>
            <person name="Felder M."/>
            <person name="Thangavelu M."/>
            <person name="Johnson D."/>
            <person name="Knights A."/>
            <person name="Loulseged H."/>
            <person name="Mungall K.L."/>
            <person name="Oliver K."/>
            <person name="Price C."/>
            <person name="Quail M.A."/>
            <person name="Urushihara H."/>
            <person name="Hernandez J."/>
            <person name="Rabbinowitsch E."/>
            <person name="Steffen D."/>
            <person name="Sanders M."/>
            <person name="Ma J."/>
            <person name="Kohara Y."/>
            <person name="Sharp S."/>
            <person name="Simmonds M.N."/>
            <person name="Spiegler S."/>
            <person name="Tivey A."/>
            <person name="Sugano S."/>
            <person name="White B."/>
            <person name="Walker D."/>
            <person name="Woodward J.R."/>
            <person name="Winckler T."/>
            <person name="Tanaka Y."/>
            <person name="Shaulsky G."/>
            <person name="Schleicher M."/>
            <person name="Weinstock G.M."/>
            <person name="Rosenthal A."/>
            <person name="Cox E.C."/>
            <person name="Chisholm R.L."/>
            <person name="Gibbs R.A."/>
            <person name="Loomis W.F."/>
            <person name="Platzer M."/>
            <person name="Kay R.R."/>
            <person name="Williams J.G."/>
            <person name="Dear P.H."/>
            <person name="Noegel A.A."/>
            <person name="Barrell B.G."/>
            <person name="Kuspa A."/>
        </authorList>
    </citation>
    <scope>NUCLEOTIDE SEQUENCE [LARGE SCALE GENOMIC DNA]</scope>
    <source>
        <strain>AX4</strain>
    </source>
</reference>
<reference key="3">
    <citation type="journal article" date="2006" name="Mol. Cell. Proteomics">
        <title>Proteomics fingerprinting of phagosome maturation and evidence for the role of a Galpha during uptake.</title>
        <authorList>
            <person name="Gotthardt D."/>
            <person name="Blancheteau V."/>
            <person name="Bosserhoff A."/>
            <person name="Ruppert T."/>
            <person name="Delorenzi M."/>
            <person name="Soldati T."/>
        </authorList>
    </citation>
    <scope>IDENTIFICATION BY MASS SPECTROMETRY [LARGE SCALE ANALYSIS]</scope>
    <source>
        <strain>AX2</strain>
    </source>
</reference>
<sequence length="232" mass="26277">MSDNLKSYQDNHIENEDEEIYERSNGKGKELVDFGKKREPLIHNHEVLNTMQSSVKTLLSSLGEDPDREGLLKTPLRMSKALLFFTQGYEQSVDEVIGEAIFNENHHEMVVVRDIDIFSLCEHHMVPFHGKCHIGYIPDQKVLGLSKLARVAEIFARRLQVQERLTRQIAQAIQAHLNPMGVAVVIEASHMCMVMRGVQKPGASTVTSSVCGIFEKDSRTRAEFFSLIKSNK</sequence>
<comment type="function">
    <text evidence="3">First enzyme in the biosynthesis of tetrahydrobiopterin (BH4) (PubMed:8870645). Catalyzes the conversion of GTP into dihydroneopterin triphosphate (7,8-dihydroneopterin 3'-triphosphate), which is subsequently catalyzed by 6-pyruvoyltetrahydropterin synthase (ptsA) and sepiapterin reductase (sprA) (PubMed:8870645).</text>
</comment>
<comment type="catalytic activity">
    <reaction evidence="3">
        <text>GTP + H2O = 7,8-dihydroneopterin 3'-triphosphate + formate + H(+)</text>
        <dbReference type="Rhea" id="RHEA:17473"/>
        <dbReference type="ChEBI" id="CHEBI:15377"/>
        <dbReference type="ChEBI" id="CHEBI:15378"/>
        <dbReference type="ChEBI" id="CHEBI:15740"/>
        <dbReference type="ChEBI" id="CHEBI:37565"/>
        <dbReference type="ChEBI" id="CHEBI:58462"/>
        <dbReference type="EC" id="3.5.4.16"/>
    </reaction>
    <physiologicalReaction direction="left-to-right" evidence="3">
        <dbReference type="Rhea" id="RHEA:17474"/>
    </physiologicalReaction>
</comment>
<comment type="biophysicochemical properties">
    <kinetics>
        <KM evidence="3">50 uM for GTP</KM>
    </kinetics>
    <temperatureDependence>
        <text evidence="3">Optimum temperature is 60 degrees Celsius.</text>
    </temperatureDependence>
</comment>
<comment type="pathway">
    <text evidence="6">Cofactor biosynthesis; 7,8-dihydroneopterin triphosphate biosynthesis; 7,8-dihydroneopterin triphosphate from GTP: step 1/1.</text>
</comment>
<comment type="subunit">
    <text evidence="1">Toroid-shaped homodecamer, composed of two pentamers of five dimers.</text>
</comment>
<comment type="similarity">
    <text evidence="5">Belongs to the GTP cyclohydrolase I family.</text>
</comment>
<accession>Q94465</accession>
<accession>Q54IV6</accession>